<evidence type="ECO:0000250" key="1">
    <source>
        <dbReference type="UniProtKB" id="P97783"/>
    </source>
</evidence>
<evidence type="ECO:0000250" key="2">
    <source>
        <dbReference type="UniProtKB" id="Q13015"/>
    </source>
</evidence>
<evidence type="ECO:0000305" key="3"/>
<accession>Q0VCT1</accession>
<name>AF1Q_BOVIN</name>
<organism>
    <name type="scientific">Bos taurus</name>
    <name type="common">Bovine</name>
    <dbReference type="NCBI Taxonomy" id="9913"/>
    <lineage>
        <taxon>Eukaryota</taxon>
        <taxon>Metazoa</taxon>
        <taxon>Chordata</taxon>
        <taxon>Craniata</taxon>
        <taxon>Vertebrata</taxon>
        <taxon>Euteleostomi</taxon>
        <taxon>Mammalia</taxon>
        <taxon>Eutheria</taxon>
        <taxon>Laurasiatheria</taxon>
        <taxon>Artiodactyla</taxon>
        <taxon>Ruminantia</taxon>
        <taxon>Pecora</taxon>
        <taxon>Bovidae</taxon>
        <taxon>Bovinae</taxon>
        <taxon>Bos</taxon>
    </lineage>
</organism>
<dbReference type="EMBL" id="BC120019">
    <property type="protein sequence ID" value="AAI20020.1"/>
    <property type="molecule type" value="mRNA"/>
</dbReference>
<dbReference type="RefSeq" id="NP_001069637.1">
    <property type="nucleotide sequence ID" value="NM_001076169.1"/>
</dbReference>
<dbReference type="RefSeq" id="XP_015318247.1">
    <property type="nucleotide sequence ID" value="XM_015462761.1"/>
</dbReference>
<dbReference type="SMR" id="Q0VCT1"/>
<dbReference type="FunCoup" id="Q0VCT1">
    <property type="interactions" value="1003"/>
</dbReference>
<dbReference type="STRING" id="9913.ENSBTAP00000020427"/>
<dbReference type="PaxDb" id="9913-ENSBTAP00000020427"/>
<dbReference type="Ensembl" id="ENSBTAT00000020427.5">
    <property type="protein sequence ID" value="ENSBTAP00000020427.3"/>
    <property type="gene ID" value="ENSBTAG00000015369.5"/>
</dbReference>
<dbReference type="Ensembl" id="ENSBTAT00000095087.1">
    <property type="protein sequence ID" value="ENSBTAP00000101788.1"/>
    <property type="gene ID" value="ENSBTAG00000015369.5"/>
</dbReference>
<dbReference type="Ensembl" id="ENSBTAT00000098925.1">
    <property type="protein sequence ID" value="ENSBTAP00000089496.1"/>
    <property type="gene ID" value="ENSBTAG00000015369.5"/>
</dbReference>
<dbReference type="Ensembl" id="ENSBTAT00000102265.1">
    <property type="protein sequence ID" value="ENSBTAP00000090733.1"/>
    <property type="gene ID" value="ENSBTAG00000015369.5"/>
</dbReference>
<dbReference type="Ensembl" id="ENSBTAT00000102445.1">
    <property type="protein sequence ID" value="ENSBTAP00000090508.1"/>
    <property type="gene ID" value="ENSBTAG00000015369.5"/>
</dbReference>
<dbReference type="Ensembl" id="ENSBTAT00000119799.1">
    <property type="protein sequence ID" value="ENSBTAP00000078965.1"/>
    <property type="gene ID" value="ENSBTAG00000015369.5"/>
</dbReference>
<dbReference type="Ensembl" id="ENSBTAT00000129428.1">
    <property type="protein sequence ID" value="ENSBTAP00000085167.1"/>
    <property type="gene ID" value="ENSBTAG00000015369.5"/>
</dbReference>
<dbReference type="GeneID" id="539519"/>
<dbReference type="KEGG" id="bta:539519"/>
<dbReference type="CTD" id="10962"/>
<dbReference type="VEuPathDB" id="HostDB:ENSBTAG00000015369"/>
<dbReference type="VGNC" id="VGNC:31502">
    <property type="gene designation" value="MLLT11"/>
</dbReference>
<dbReference type="eggNOG" id="ENOG502S7MB">
    <property type="taxonomic scope" value="Eukaryota"/>
</dbReference>
<dbReference type="GeneTree" id="ENSGT00390000009895"/>
<dbReference type="HOGENOM" id="CLU_2440320_0_0_1"/>
<dbReference type="InParanoid" id="Q0VCT1"/>
<dbReference type="OMA" id="RISPVDF"/>
<dbReference type="OrthoDB" id="9991950at2759"/>
<dbReference type="TreeFam" id="TF336906"/>
<dbReference type="Proteomes" id="UP000009136">
    <property type="component" value="Chromosome 3"/>
</dbReference>
<dbReference type="Bgee" id="ENSBTAG00000015369">
    <property type="expression patterns" value="Expressed in Ammon's horn and 103 other cell types or tissues"/>
</dbReference>
<dbReference type="GO" id="GO:0005813">
    <property type="term" value="C:centrosome"/>
    <property type="evidence" value="ECO:0007669"/>
    <property type="project" value="UniProtKB-SubCell"/>
</dbReference>
<dbReference type="GO" id="GO:0005829">
    <property type="term" value="C:cytosol"/>
    <property type="evidence" value="ECO:0000318"/>
    <property type="project" value="GO_Central"/>
</dbReference>
<dbReference type="GO" id="GO:0005654">
    <property type="term" value="C:nucleoplasm"/>
    <property type="evidence" value="ECO:0000318"/>
    <property type="project" value="GO_Central"/>
</dbReference>
<dbReference type="GO" id="GO:0097191">
    <property type="term" value="P:extrinsic apoptotic signaling pathway"/>
    <property type="evidence" value="ECO:0000250"/>
    <property type="project" value="UniProtKB"/>
</dbReference>
<dbReference type="GO" id="GO:0097193">
    <property type="term" value="P:intrinsic apoptotic signaling pathway"/>
    <property type="evidence" value="ECO:0000250"/>
    <property type="project" value="UniProtKB"/>
</dbReference>
<dbReference type="GO" id="GO:0043065">
    <property type="term" value="P:positive regulation of apoptotic process"/>
    <property type="evidence" value="ECO:0000250"/>
    <property type="project" value="UniProtKB"/>
</dbReference>
<dbReference type="GO" id="GO:0045893">
    <property type="term" value="P:positive regulation of DNA-templated transcription"/>
    <property type="evidence" value="ECO:0000250"/>
    <property type="project" value="UniProtKB"/>
</dbReference>
<dbReference type="GO" id="GO:0051901">
    <property type="term" value="P:positive regulation of mitochondrial depolarization"/>
    <property type="evidence" value="ECO:0000250"/>
    <property type="project" value="UniProtKB"/>
</dbReference>
<dbReference type="GO" id="GO:0090200">
    <property type="term" value="P:positive regulation of release of cytochrome c from mitochondria"/>
    <property type="evidence" value="ECO:0000250"/>
    <property type="project" value="UniProtKB"/>
</dbReference>
<dbReference type="InterPro" id="IPR026778">
    <property type="entry name" value="MLLT11_fam"/>
</dbReference>
<dbReference type="InterPro" id="IPR033461">
    <property type="entry name" value="WRNPLPNID"/>
</dbReference>
<dbReference type="PANTHER" id="PTHR15404">
    <property type="entry name" value="PROTEIN AF1Q"/>
    <property type="match status" value="1"/>
</dbReference>
<dbReference type="PANTHER" id="PTHR15404:SF2">
    <property type="entry name" value="PROTEIN AF1Q"/>
    <property type="match status" value="1"/>
</dbReference>
<dbReference type="Pfam" id="PF15017">
    <property type="entry name" value="WRNPLPNID"/>
    <property type="match status" value="1"/>
</dbReference>
<feature type="chain" id="PRO_0000293474" description="Protein AF1q">
    <location>
        <begin position="1"/>
        <end position="90"/>
    </location>
</feature>
<feature type="short sequence motif" description="Nuclear export signal" evidence="2">
    <location>
        <begin position="24"/>
        <end position="32"/>
    </location>
</feature>
<feature type="modified residue" description="Phosphoserine" evidence="1">
    <location>
        <position position="84"/>
    </location>
</feature>
<comment type="function">
    <text evidence="2">Cofactor for the transcription factor TCF7. Involved in regulation of lymphoid development by driving multipotent hematopoietic progenitor cells towards a T-cell fate.</text>
</comment>
<comment type="subunit">
    <text evidence="2">Interacts with HSPA8 and LAMP2 isoform A; the interaction may target MLLT11 for degradation via chaperone-mediated autophagy. Interacts with TCF7.</text>
</comment>
<comment type="subcellular location">
    <subcellularLocation>
        <location evidence="2">Nucleus</location>
    </subcellularLocation>
    <subcellularLocation>
        <location evidence="2">Cytoplasm</location>
    </subcellularLocation>
    <subcellularLocation>
        <location evidence="2">Cytoplasm</location>
        <location evidence="2">Cytoskeleton</location>
        <location evidence="2">Microtubule organizing center</location>
        <location evidence="2">Centrosome</location>
    </subcellularLocation>
    <text evidence="2">Continuous nuclear export is followed by degradation.</text>
</comment>
<comment type="PTM">
    <text evidence="2">Ubiquitinated, leading to degradation.</text>
</comment>
<comment type="similarity">
    <text evidence="3">Belongs to the MLLT11 family.</text>
</comment>
<keyword id="KW-0963">Cytoplasm</keyword>
<keyword id="KW-0206">Cytoskeleton</keyword>
<keyword id="KW-0539">Nucleus</keyword>
<keyword id="KW-0597">Phosphoprotein</keyword>
<keyword id="KW-1185">Reference proteome</keyword>
<keyword id="KW-0832">Ubl conjugation</keyword>
<reference key="1">
    <citation type="submission" date="2006-08" db="EMBL/GenBank/DDBJ databases">
        <authorList>
            <consortium name="NIH - Mammalian Gene Collection (MGC) project"/>
        </authorList>
    </citation>
    <scope>NUCLEOTIDE SEQUENCE [LARGE SCALE MRNA]</scope>
    <source>
        <strain>Hereford</strain>
        <tissue>Fetal cerebellum</tissue>
    </source>
</reference>
<proteinExistence type="inferred from homology"/>
<gene>
    <name type="primary">MLLT11</name>
    <name type="synonym">AF1Q</name>
</gene>
<protein>
    <recommendedName>
        <fullName>Protein AF1q</fullName>
    </recommendedName>
</protein>
<sequence length="90" mass="10075">MRDPVSSQYSSFLFWRMPIPELDLSELEGLGLSDTSTYKIQDSSAAKMTGKAPGAEQEKNPEGDALLEYSTFNFWRAPIASIHSFELDLL</sequence>